<reference key="1">
    <citation type="journal article" date="2005" name="Nature">
        <title>The genome of the social amoeba Dictyostelium discoideum.</title>
        <authorList>
            <person name="Eichinger L."/>
            <person name="Pachebat J.A."/>
            <person name="Gloeckner G."/>
            <person name="Rajandream M.A."/>
            <person name="Sucgang R."/>
            <person name="Berriman M."/>
            <person name="Song J."/>
            <person name="Olsen R."/>
            <person name="Szafranski K."/>
            <person name="Xu Q."/>
            <person name="Tunggal B."/>
            <person name="Kummerfeld S."/>
            <person name="Madera M."/>
            <person name="Konfortov B.A."/>
            <person name="Rivero F."/>
            <person name="Bankier A.T."/>
            <person name="Lehmann R."/>
            <person name="Hamlin N."/>
            <person name="Davies R."/>
            <person name="Gaudet P."/>
            <person name="Fey P."/>
            <person name="Pilcher K."/>
            <person name="Chen G."/>
            <person name="Saunders D."/>
            <person name="Sodergren E.J."/>
            <person name="Davis P."/>
            <person name="Kerhornou A."/>
            <person name="Nie X."/>
            <person name="Hall N."/>
            <person name="Anjard C."/>
            <person name="Hemphill L."/>
            <person name="Bason N."/>
            <person name="Farbrother P."/>
            <person name="Desany B."/>
            <person name="Just E."/>
            <person name="Morio T."/>
            <person name="Rost R."/>
            <person name="Churcher C.M."/>
            <person name="Cooper J."/>
            <person name="Haydock S."/>
            <person name="van Driessche N."/>
            <person name="Cronin A."/>
            <person name="Goodhead I."/>
            <person name="Muzny D.M."/>
            <person name="Mourier T."/>
            <person name="Pain A."/>
            <person name="Lu M."/>
            <person name="Harper D."/>
            <person name="Lindsay R."/>
            <person name="Hauser H."/>
            <person name="James K.D."/>
            <person name="Quiles M."/>
            <person name="Madan Babu M."/>
            <person name="Saito T."/>
            <person name="Buchrieser C."/>
            <person name="Wardroper A."/>
            <person name="Felder M."/>
            <person name="Thangavelu M."/>
            <person name="Johnson D."/>
            <person name="Knights A."/>
            <person name="Loulseged H."/>
            <person name="Mungall K.L."/>
            <person name="Oliver K."/>
            <person name="Price C."/>
            <person name="Quail M.A."/>
            <person name="Urushihara H."/>
            <person name="Hernandez J."/>
            <person name="Rabbinowitsch E."/>
            <person name="Steffen D."/>
            <person name="Sanders M."/>
            <person name="Ma J."/>
            <person name="Kohara Y."/>
            <person name="Sharp S."/>
            <person name="Simmonds M.N."/>
            <person name="Spiegler S."/>
            <person name="Tivey A."/>
            <person name="Sugano S."/>
            <person name="White B."/>
            <person name="Walker D."/>
            <person name="Woodward J.R."/>
            <person name="Winckler T."/>
            <person name="Tanaka Y."/>
            <person name="Shaulsky G."/>
            <person name="Schleicher M."/>
            <person name="Weinstock G.M."/>
            <person name="Rosenthal A."/>
            <person name="Cox E.C."/>
            <person name="Chisholm R.L."/>
            <person name="Gibbs R.A."/>
            <person name="Loomis W.F."/>
            <person name="Platzer M."/>
            <person name="Kay R.R."/>
            <person name="Williams J.G."/>
            <person name="Dear P.H."/>
            <person name="Noegel A.A."/>
            <person name="Barrell B.G."/>
            <person name="Kuspa A."/>
        </authorList>
    </citation>
    <scope>NUCLEOTIDE SEQUENCE [LARGE SCALE GENOMIC DNA]</scope>
    <source>
        <strain>AX4</strain>
    </source>
</reference>
<reference key="2">
    <citation type="journal article" date="2006" name="Development">
        <title>bZIP transcription factor interactions regulate DIF responses in Dictyostelium.</title>
        <authorList>
            <person name="Huang E."/>
            <person name="Blagg S.L."/>
            <person name="Keller T."/>
            <person name="Katoh M."/>
            <person name="Shaulsky G."/>
            <person name="Thompson C.R.L."/>
        </authorList>
    </citation>
    <scope>IDENTIFICATION</scope>
</reference>
<sequence>MEESNNFLLSPDSIWSQLLENSYALNEINCFQSFGTIDNNNNNYSNNNKNGNEELSQPTEIQQQLQNYQELQQQKYQERQQQYQTQYQQPYIEPIFEIVVTQQDQQELIPQQQQQEQDQQEDQDQEQEQELQQQQQQLQQQQQQQQQQQQQQQQQQQQQQQQQQQQQKQQKQQKQQQQEQPSIIKEQDQEQKKIIQEQLCEKSIQTLENHFFNTNTPKLDHQILSNYSEFFKINQPITDIPTTLNTNLQSDNNNNNNNNNNNNNNNNNNNNNNNNNNNLLNEKQIESTSKIKRINLGYDITKITFNKIEKGKRNQTESSKNFRERKKEYIKDIELKLKELTIENDKLKKENDTLKKIGIEIMRSEPESINMIMECKKIIKKLEKALIDNDERSLIYLLYLYHSETSKRYSLTEIEVDKIINPYSQLKLKLAGYIQNPTTEILDIFGGNNNNNNNNNNNNNNNNNNNDNDDDNEEEEISWFKKYKKEANLTIEQSNKLDLLRDYHCLKFELLLKERRELDRDIKKLYNGIALSGFDLTPRSLANWDIDKQIETTNKLNLLKIKIISSLNLNLDTFSSISSILSPKQEALLLVRAHLFGSNKKNPHIEILNNVWTGLISKSSSPSFFEIAKLLKEMSDSANAKIMEDYLYKK</sequence>
<accession>Q54T16</accession>
<comment type="function">
    <text evidence="1">Probable transcriptional regulator.</text>
</comment>
<comment type="subcellular location">
    <subcellularLocation>
        <location evidence="1">Nucleus</location>
    </subcellularLocation>
</comment>
<comment type="similarity">
    <text evidence="4">Belongs to the bZIP family.</text>
</comment>
<organism>
    <name type="scientific">Dictyostelium discoideum</name>
    <name type="common">Social amoeba</name>
    <dbReference type="NCBI Taxonomy" id="44689"/>
    <lineage>
        <taxon>Eukaryota</taxon>
        <taxon>Amoebozoa</taxon>
        <taxon>Evosea</taxon>
        <taxon>Eumycetozoa</taxon>
        <taxon>Dictyostelia</taxon>
        <taxon>Dictyosteliales</taxon>
        <taxon>Dictyosteliaceae</taxon>
        <taxon>Dictyostelium</taxon>
    </lineage>
</organism>
<protein>
    <recommendedName>
        <fullName>Probable basic-leucine zipper transcription factor K</fullName>
    </recommendedName>
</protein>
<name>BZPK_DICDI</name>
<evidence type="ECO:0000250" key="1"/>
<evidence type="ECO:0000255" key="2"/>
<evidence type="ECO:0000256" key="3">
    <source>
        <dbReference type="SAM" id="MobiDB-lite"/>
    </source>
</evidence>
<evidence type="ECO:0000305" key="4"/>
<dbReference type="EMBL" id="AAFI02000044">
    <property type="protein sequence ID" value="EAL66446.1"/>
    <property type="molecule type" value="Genomic_DNA"/>
</dbReference>
<dbReference type="RefSeq" id="XP_640435.1">
    <property type="nucleotide sequence ID" value="XM_635343.1"/>
</dbReference>
<dbReference type="SMR" id="Q54T16"/>
<dbReference type="FunCoup" id="Q54T16">
    <property type="interactions" value="65"/>
</dbReference>
<dbReference type="STRING" id="44689.Q54T16"/>
<dbReference type="PaxDb" id="44689-DDB0220094"/>
<dbReference type="EnsemblProtists" id="EAL66446">
    <property type="protein sequence ID" value="EAL66446"/>
    <property type="gene ID" value="DDB_G0282049"/>
</dbReference>
<dbReference type="GeneID" id="8623390"/>
<dbReference type="KEGG" id="ddi:DDB_G0282049"/>
<dbReference type="dictyBase" id="DDB_G0282049">
    <property type="gene designation" value="bzpK"/>
</dbReference>
<dbReference type="VEuPathDB" id="AmoebaDB:DDB_G0282049"/>
<dbReference type="HOGENOM" id="CLU_421769_0_0_1"/>
<dbReference type="InParanoid" id="Q54T16"/>
<dbReference type="PhylomeDB" id="Q54T16"/>
<dbReference type="PRO" id="PR:Q54T16"/>
<dbReference type="Proteomes" id="UP000002195">
    <property type="component" value="Chromosome 3"/>
</dbReference>
<dbReference type="GO" id="GO:0005634">
    <property type="term" value="C:nucleus"/>
    <property type="evidence" value="ECO:0000318"/>
    <property type="project" value="GO_Central"/>
</dbReference>
<dbReference type="GO" id="GO:0003700">
    <property type="term" value="F:DNA-binding transcription factor activity"/>
    <property type="evidence" value="ECO:0007669"/>
    <property type="project" value="InterPro"/>
</dbReference>
<dbReference type="GO" id="GO:0043565">
    <property type="term" value="F:sequence-specific DNA binding"/>
    <property type="evidence" value="ECO:0000318"/>
    <property type="project" value="GO_Central"/>
</dbReference>
<dbReference type="GO" id="GO:0010468">
    <property type="term" value="P:regulation of gene expression"/>
    <property type="evidence" value="ECO:0000318"/>
    <property type="project" value="GO_Central"/>
</dbReference>
<dbReference type="CDD" id="cd14686">
    <property type="entry name" value="bZIP"/>
    <property type="match status" value="1"/>
</dbReference>
<dbReference type="Gene3D" id="1.20.5.170">
    <property type="match status" value="1"/>
</dbReference>
<dbReference type="InterPro" id="IPR046347">
    <property type="entry name" value="bZIP_sf"/>
</dbReference>
<dbReference type="PANTHER" id="PTHR14312">
    <property type="entry name" value="CREB/ATF BZIP TRANSCRIPTION FACTOR"/>
    <property type="match status" value="1"/>
</dbReference>
<dbReference type="PANTHER" id="PTHR14312:SF2">
    <property type="entry name" value="GLYCOSYLTRANSFERASE-RELATED"/>
    <property type="match status" value="1"/>
</dbReference>
<dbReference type="SUPFAM" id="SSF57959">
    <property type="entry name" value="Leucine zipper domain"/>
    <property type="match status" value="1"/>
</dbReference>
<feature type="chain" id="PRO_0000383603" description="Probable basic-leucine zipper transcription factor K">
    <location>
        <begin position="1"/>
        <end position="650"/>
    </location>
</feature>
<feature type="domain" description="bZIP">
    <location>
        <begin position="305"/>
        <end position="368"/>
    </location>
</feature>
<feature type="region of interest" description="Disordered" evidence="3">
    <location>
        <begin position="109"/>
        <end position="130"/>
    </location>
</feature>
<feature type="region of interest" description="Disordered" evidence="3">
    <location>
        <begin position="242"/>
        <end position="279"/>
    </location>
</feature>
<feature type="region of interest" description="Basic motif" evidence="1">
    <location>
        <begin position="307"/>
        <end position="327"/>
    </location>
</feature>
<feature type="region of interest" description="Leucine-zipper" evidence="1">
    <location>
        <begin position="330"/>
        <end position="337"/>
    </location>
</feature>
<feature type="region of interest" description="Disordered" evidence="3">
    <location>
        <begin position="452"/>
        <end position="473"/>
    </location>
</feature>
<feature type="coiled-coil region" evidence="2">
    <location>
        <begin position="37"/>
        <end position="180"/>
    </location>
</feature>
<feature type="coiled-coil region" evidence="2">
    <location>
        <begin position="259"/>
        <end position="286"/>
    </location>
</feature>
<feature type="compositionally biased region" description="Acidic residues" evidence="3">
    <location>
        <begin position="118"/>
        <end position="129"/>
    </location>
</feature>
<feature type="compositionally biased region" description="Polar residues" evidence="3">
    <location>
        <begin position="242"/>
        <end position="251"/>
    </location>
</feature>
<feature type="compositionally biased region" description="Low complexity" evidence="3">
    <location>
        <begin position="252"/>
        <end position="278"/>
    </location>
</feature>
<feature type="compositionally biased region" description="Low complexity" evidence="3">
    <location>
        <begin position="452"/>
        <end position="466"/>
    </location>
</feature>
<gene>
    <name type="primary">bzpK</name>
    <name type="ORF">DDB_G0282049</name>
</gene>
<keyword id="KW-0175">Coiled coil</keyword>
<keyword id="KW-0238">DNA-binding</keyword>
<keyword id="KW-0539">Nucleus</keyword>
<keyword id="KW-1185">Reference proteome</keyword>
<keyword id="KW-0804">Transcription</keyword>
<keyword id="KW-0805">Transcription regulation</keyword>
<proteinExistence type="inferred from homology"/>